<organism>
    <name type="scientific">Mus musculus</name>
    <name type="common">Mouse</name>
    <dbReference type="NCBI Taxonomy" id="10090"/>
    <lineage>
        <taxon>Eukaryota</taxon>
        <taxon>Metazoa</taxon>
        <taxon>Chordata</taxon>
        <taxon>Craniata</taxon>
        <taxon>Vertebrata</taxon>
        <taxon>Euteleostomi</taxon>
        <taxon>Mammalia</taxon>
        <taxon>Eutheria</taxon>
        <taxon>Euarchontoglires</taxon>
        <taxon>Glires</taxon>
        <taxon>Rodentia</taxon>
        <taxon>Myomorpha</taxon>
        <taxon>Muroidea</taxon>
        <taxon>Muridae</taxon>
        <taxon>Murinae</taxon>
        <taxon>Mus</taxon>
        <taxon>Mus</taxon>
    </lineage>
</organism>
<keyword id="KW-0158">Chromosome</keyword>
<keyword id="KW-0164">Citrullination</keyword>
<keyword id="KW-0217">Developmental protein</keyword>
<keyword id="KW-0221">Differentiation</keyword>
<keyword id="KW-0903">Direct protein sequencing</keyword>
<keyword id="KW-0238">DNA-binding</keyword>
<keyword id="KW-0539">Nucleus</keyword>
<keyword id="KW-0597">Phosphoprotein</keyword>
<keyword id="KW-1185">Reference proteome</keyword>
<keyword id="KW-0744">Spermatogenesis</keyword>
<feature type="initiator methionine" description="Removed" evidence="6">
    <location>
        <position position="1"/>
    </location>
</feature>
<feature type="chain" id="PRO_0000195919" description="Histone H1t">
    <location>
        <begin position="2"/>
        <end position="208"/>
    </location>
</feature>
<feature type="domain" description="H15" evidence="4">
    <location>
        <begin position="38"/>
        <end position="111"/>
    </location>
</feature>
<feature type="region of interest" description="Disordered" evidence="5">
    <location>
        <begin position="1"/>
        <end position="39"/>
    </location>
</feature>
<feature type="region of interest" description="Disordered" evidence="5">
    <location>
        <begin position="95"/>
        <end position="208"/>
    </location>
</feature>
<feature type="compositionally biased region" description="Polar residues" evidence="5">
    <location>
        <begin position="1"/>
        <end position="12"/>
    </location>
</feature>
<feature type="compositionally biased region" description="Basic residues" evidence="5">
    <location>
        <begin position="121"/>
        <end position="134"/>
    </location>
</feature>
<feature type="compositionally biased region" description="Basic residues" evidence="5">
    <location>
        <begin position="143"/>
        <end position="154"/>
    </location>
</feature>
<feature type="compositionally biased region" description="Basic and acidic residues" evidence="5">
    <location>
        <begin position="199"/>
        <end position="208"/>
    </location>
</feature>
<feature type="site" description="Important for nucleosome binding properties" evidence="1">
    <location>
        <position position="54"/>
    </location>
</feature>
<feature type="modified residue" description="Phosphoserine" evidence="7">
    <location>
        <position position="9"/>
    </location>
</feature>
<feature type="modified residue" description="Citrulline" evidence="3">
    <location>
        <position position="56"/>
    </location>
</feature>
<feature type="modified residue" description="Phosphoserine" evidence="6 7">
    <location>
        <position position="141"/>
    </location>
</feature>
<feature type="modified residue" description="Phosphothreonine" evidence="6 7">
    <location>
        <position position="156"/>
    </location>
</feature>
<feature type="modified residue" description="Phosphoserine" evidence="6">
    <location>
        <position position="163"/>
    </location>
</feature>
<feature type="modified residue" description="Phosphoserine" evidence="6 7">
    <location>
        <position position="178"/>
    </location>
</feature>
<feature type="sequence conflict" description="In Ref. 3; AAO06219." evidence="9" ref="3">
    <original>E</original>
    <variation>EE</variation>
    <location>
        <position position="18"/>
    </location>
</feature>
<feature type="sequence conflict" description="In Ref. 2; AAB38417/AAA18359." evidence="9" ref="2">
    <original>G</original>
    <variation>R</variation>
    <location>
        <position position="164"/>
    </location>
</feature>
<proteinExistence type="evidence at protein level"/>
<dbReference type="EMBL" id="L28753">
    <property type="protein sequence ID" value="AAB38417.1"/>
    <property type="molecule type" value="Genomic_DNA"/>
</dbReference>
<dbReference type="EMBL" id="X72805">
    <property type="protein sequence ID" value="CAA51325.1"/>
    <property type="molecule type" value="Genomic_DNA"/>
</dbReference>
<dbReference type="EMBL" id="U06232">
    <property type="protein sequence ID" value="AAA18359.1"/>
    <property type="molecule type" value="Unassigned_DNA"/>
</dbReference>
<dbReference type="EMBL" id="AY158908">
    <property type="protein sequence ID" value="AAO06219.1"/>
    <property type="molecule type" value="Genomic_DNA"/>
</dbReference>
<dbReference type="EMBL" id="BC119305">
    <property type="protein sequence ID" value="AAI19306.1"/>
    <property type="molecule type" value="mRNA"/>
</dbReference>
<dbReference type="EMBL" id="BC119307">
    <property type="protein sequence ID" value="AAI19308.1"/>
    <property type="molecule type" value="mRNA"/>
</dbReference>
<dbReference type="PIR" id="S43434">
    <property type="entry name" value="S43434"/>
</dbReference>
<dbReference type="RefSeq" id="NP_034507.2">
    <property type="nucleotide sequence ID" value="NM_010377.3"/>
</dbReference>
<dbReference type="SMR" id="Q07133"/>
<dbReference type="BioGRID" id="223727">
    <property type="interactions" value="4"/>
</dbReference>
<dbReference type="FunCoup" id="Q07133">
    <property type="interactions" value="242"/>
</dbReference>
<dbReference type="STRING" id="10090.ENSMUSP00000037304"/>
<dbReference type="iPTMnet" id="Q07133"/>
<dbReference type="PhosphoSitePlus" id="Q07133"/>
<dbReference type="jPOST" id="Q07133"/>
<dbReference type="PaxDb" id="10090-ENSMUSP00000037304"/>
<dbReference type="ProteomicsDB" id="270907"/>
<dbReference type="DNASU" id="107970"/>
<dbReference type="GeneID" id="107970"/>
<dbReference type="KEGG" id="mmu:107970"/>
<dbReference type="AGR" id="MGI:1888530"/>
<dbReference type="CTD" id="107970"/>
<dbReference type="MGI" id="MGI:1888530">
    <property type="gene designation" value="H1f6"/>
</dbReference>
<dbReference type="eggNOG" id="KOG4012">
    <property type="taxonomic scope" value="Eukaryota"/>
</dbReference>
<dbReference type="InParanoid" id="Q07133"/>
<dbReference type="OrthoDB" id="9634976at2759"/>
<dbReference type="PhylomeDB" id="Q07133"/>
<dbReference type="BioGRID-ORCS" id="107970">
    <property type="hits" value="3 hits in 76 CRISPR screens"/>
</dbReference>
<dbReference type="PRO" id="PR:Q07133"/>
<dbReference type="Proteomes" id="UP000000589">
    <property type="component" value="Unplaced"/>
</dbReference>
<dbReference type="RNAct" id="Q07133">
    <property type="molecule type" value="protein"/>
</dbReference>
<dbReference type="GO" id="GO:0000794">
    <property type="term" value="C:condensed nuclear chromosome"/>
    <property type="evidence" value="ECO:0000314"/>
    <property type="project" value="MGI"/>
</dbReference>
<dbReference type="GO" id="GO:0000786">
    <property type="term" value="C:nucleosome"/>
    <property type="evidence" value="ECO:0007669"/>
    <property type="project" value="InterPro"/>
</dbReference>
<dbReference type="GO" id="GO:0003677">
    <property type="term" value="F:DNA binding"/>
    <property type="evidence" value="ECO:0000314"/>
    <property type="project" value="MGI"/>
</dbReference>
<dbReference type="GO" id="GO:0003690">
    <property type="term" value="F:double-stranded DNA binding"/>
    <property type="evidence" value="ECO:0000315"/>
    <property type="project" value="CAFA"/>
</dbReference>
<dbReference type="GO" id="GO:0030527">
    <property type="term" value="F:structural constituent of chromatin"/>
    <property type="evidence" value="ECO:0007669"/>
    <property type="project" value="InterPro"/>
</dbReference>
<dbReference type="GO" id="GO:0007339">
    <property type="term" value="P:binding of sperm to zona pellucida"/>
    <property type="evidence" value="ECO:0000316"/>
    <property type="project" value="MGI"/>
</dbReference>
<dbReference type="GO" id="GO:0030154">
    <property type="term" value="P:cell differentiation"/>
    <property type="evidence" value="ECO:0007669"/>
    <property type="project" value="UniProtKB-KW"/>
</dbReference>
<dbReference type="GO" id="GO:0030317">
    <property type="term" value="P:flagellated sperm motility"/>
    <property type="evidence" value="ECO:0000316"/>
    <property type="project" value="MGI"/>
</dbReference>
<dbReference type="GO" id="GO:0006334">
    <property type="term" value="P:nucleosome assembly"/>
    <property type="evidence" value="ECO:0007669"/>
    <property type="project" value="InterPro"/>
</dbReference>
<dbReference type="GO" id="GO:0007283">
    <property type="term" value="P:spermatogenesis"/>
    <property type="evidence" value="ECO:0000316"/>
    <property type="project" value="MGI"/>
</dbReference>
<dbReference type="CDD" id="cd00073">
    <property type="entry name" value="H15"/>
    <property type="match status" value="1"/>
</dbReference>
<dbReference type="FunFam" id="1.10.10.10:FF:000075">
    <property type="entry name" value="Histone H1 like"/>
    <property type="match status" value="1"/>
</dbReference>
<dbReference type="Gene3D" id="1.10.10.10">
    <property type="entry name" value="Winged helix-like DNA-binding domain superfamily/Winged helix DNA-binding domain"/>
    <property type="match status" value="1"/>
</dbReference>
<dbReference type="InterPro" id="IPR005819">
    <property type="entry name" value="H1/H5"/>
</dbReference>
<dbReference type="InterPro" id="IPR005818">
    <property type="entry name" value="Histone_H1/H5_H15"/>
</dbReference>
<dbReference type="InterPro" id="IPR036388">
    <property type="entry name" value="WH-like_DNA-bd_sf"/>
</dbReference>
<dbReference type="InterPro" id="IPR036390">
    <property type="entry name" value="WH_DNA-bd_sf"/>
</dbReference>
<dbReference type="Pfam" id="PF00538">
    <property type="entry name" value="Linker_histone"/>
    <property type="match status" value="1"/>
</dbReference>
<dbReference type="PRINTS" id="PR00624">
    <property type="entry name" value="HISTONEH5"/>
</dbReference>
<dbReference type="SMART" id="SM00526">
    <property type="entry name" value="H15"/>
    <property type="match status" value="1"/>
</dbReference>
<dbReference type="SUPFAM" id="SSF46785">
    <property type="entry name" value="Winged helix' DNA-binding domain"/>
    <property type="match status" value="1"/>
</dbReference>
<dbReference type="PROSITE" id="PS51504">
    <property type="entry name" value="H15"/>
    <property type="match status" value="1"/>
</dbReference>
<sequence>MSETAPAASSTLVPAPVEKPSSKRRGKKPGLAPARKPRGFSVSKLIPEALSTSQERAGMSLAALKKALAAAGYDVEKNNSRIKLALKRLVNKGVLVQTKGTGASGSFKLSKKAASGNDKGKGKKSASAKAKKMGLPRASRSPKSSKTKAVKKPKATPTKASGSGRKTKGAKGVQQRKSPAKARAANPNSGKAKMVMQKTDLRKAAGRK</sequence>
<gene>
    <name evidence="2" type="primary">H1-6</name>
    <name evidence="10" type="synonym">H1f6</name>
    <name type="synonym">H1ft</name>
    <name type="synonym">H1t</name>
    <name evidence="10" type="synonym">Hist1h1t</name>
</gene>
<name>H1T_MOUSE</name>
<comment type="function">
    <text evidence="2">Testis-specific histone H1 that forms less compacted chromatin compared to other H1 histone subtypes. Formation of more relaxed chromatin may be required to promote chromatin architecture required for proper chromosome regulation during meiosis, such as homologous recombination. Histones H1 act as linkers that bind to nucleosomes and compact polynucleosomes into a higher-order chromatin configuration.</text>
</comment>
<comment type="subcellular location">
    <subcellularLocation>
        <location evidence="9">Nucleus</location>
    </subcellularLocation>
    <subcellularLocation>
        <location evidence="9">Chromosome</location>
    </subcellularLocation>
</comment>
<comment type="tissue specificity">
    <text evidence="8">Testis-specific.</text>
</comment>
<comment type="developmental stage">
    <text evidence="8">This histone is a testis-specific H1 variant that appears during meiosis in spermatogenesis.</text>
</comment>
<comment type="PTM">
    <text evidence="7">Phosphorylated in early spermatids.</text>
</comment>
<comment type="PTM">
    <text evidence="3">Citrullination at Arg-56 (H1R54ci) by PADI4 takes place within the DNA-binding site of H1 and results in its displacement from chromatin and global chromatin decondensation, thereby promoting pluripotency and stem cell maintenance.</text>
</comment>
<comment type="similarity">
    <text evidence="4">Belongs to the histone H1/H5 family.</text>
</comment>
<accession>Q07133</accession>
<accession>Q0VEA3</accession>
<accession>Q8CGP8</accession>
<protein>
    <recommendedName>
        <fullName>Histone H1t</fullName>
    </recommendedName>
    <alternativeName>
        <fullName>Testicular H1 histone</fullName>
    </alternativeName>
</protein>
<evidence type="ECO:0000250" key="1">
    <source>
        <dbReference type="UniProtKB" id="P06349"/>
    </source>
</evidence>
<evidence type="ECO:0000250" key="2">
    <source>
        <dbReference type="UniProtKB" id="P22492"/>
    </source>
</evidence>
<evidence type="ECO:0000250" key="3">
    <source>
        <dbReference type="UniProtKB" id="P43275"/>
    </source>
</evidence>
<evidence type="ECO:0000255" key="4">
    <source>
        <dbReference type="PROSITE-ProRule" id="PRU00837"/>
    </source>
</evidence>
<evidence type="ECO:0000256" key="5">
    <source>
        <dbReference type="SAM" id="MobiDB-lite"/>
    </source>
</evidence>
<evidence type="ECO:0000269" key="6">
    <source>
    </source>
</evidence>
<evidence type="ECO:0000269" key="7">
    <source>
    </source>
</evidence>
<evidence type="ECO:0000269" key="8">
    <source>
    </source>
</evidence>
<evidence type="ECO:0000305" key="9"/>
<evidence type="ECO:0000312" key="10">
    <source>
        <dbReference type="MGI" id="MGI:1888530"/>
    </source>
</evidence>
<reference key="1">
    <citation type="journal article" date="1993" name="Biochim. Biophys. Acta">
        <title>Structure and expression of the mouse testicular H1 histone gene (H1t).</title>
        <authorList>
            <person name="Drabent B."/>
            <person name="Bode C."/>
            <person name="Doenecke D."/>
        </authorList>
    </citation>
    <scope>NUCLEOTIDE SEQUENCE [GENOMIC DNA]</scope>
    <scope>TISSUE SPECIFICITY</scope>
    <scope>DEVELOPMENTAL STAGE</scope>
    <source>
        <strain>BALB/cJ</strain>
        <tissue>Leukocyte</tissue>
    </source>
</reference>
<reference key="2">
    <citation type="submission" date="1994-02" db="EMBL/GenBank/DDBJ databases">
        <authorList>
            <person name="van Wert J."/>
            <person name="Wright J."/>
            <person name="Wolfe S.A."/>
            <person name="Grimes S.R."/>
        </authorList>
    </citation>
    <scope>NUCLEOTIDE SEQUENCE [GENOMIC DNA]</scope>
    <source>
        <strain>CD-1</strain>
        <tissue>Testis</tissue>
    </source>
</reference>
<reference key="3">
    <citation type="journal article" date="2002" name="Genomics">
        <title>The human and mouse replication-dependent histone genes.</title>
        <authorList>
            <person name="Marzluff W.F."/>
            <person name="Gongidi P."/>
            <person name="Woods K.R."/>
            <person name="Jin J."/>
            <person name="Maltais L.J."/>
        </authorList>
    </citation>
    <scope>NUCLEOTIDE SEQUENCE [GENOMIC DNA]</scope>
</reference>
<reference key="4">
    <citation type="journal article" date="2004" name="Genome Res.">
        <title>The status, quality, and expansion of the NIH full-length cDNA project: the Mammalian Gene Collection (MGC).</title>
        <authorList>
            <consortium name="The MGC Project Team"/>
        </authorList>
    </citation>
    <scope>NUCLEOTIDE SEQUENCE [LARGE SCALE MRNA]</scope>
    <source>
        <tissue>Brain</tissue>
    </source>
</reference>
<reference key="5">
    <citation type="journal article" date="2009" name="J. Biol. Chem.">
        <title>Testis-specific linker histone H1t is multiply phosphorylated during spermatogenesis. Identification of phosphorylation sites.</title>
        <authorList>
            <person name="Sarg B."/>
            <person name="Chwatal S."/>
            <person name="Talasz H."/>
            <person name="Lindner H.H."/>
        </authorList>
    </citation>
    <scope>PHOSPHORYLATION AT SER-9; SER-141; THR-156 AND SER-178</scope>
</reference>
<reference key="6">
    <citation type="journal article" date="2008" name="J. Proteome Res.">
        <title>C-terminal phosphorylation of murine testis-specific histone H1t in elongating spermatids.</title>
        <authorList>
            <person name="Rose K.L."/>
            <person name="Li A."/>
            <person name="Zalenskaya I."/>
            <person name="Zhang Y."/>
            <person name="Unni E."/>
            <person name="Hodgson K.C."/>
            <person name="Yu Y."/>
            <person name="Shabanowitz J."/>
            <person name="Meistrich M.L."/>
            <person name="Hunt D.F."/>
            <person name="Ausio J."/>
        </authorList>
    </citation>
    <scope>PROTEIN SEQUENCE OF 2-24</scope>
    <scope>PHOSPHORYLATION AT SER-141; THR-156; SER-163 AND SER-178</scope>
</reference>